<reference key="1">
    <citation type="journal article" date="2004" name="IUBMB Life">
        <title>Neuroglobin and cytoglobin: genes, proteins and evolution.</title>
        <authorList>
            <person name="Burmester T."/>
            <person name="Haberkamp M."/>
            <person name="Mitz S."/>
            <person name="Roesner A."/>
            <person name="Schmidt M."/>
            <person name="Ebner B."/>
            <person name="Gerlach F."/>
            <person name="Fuchs C."/>
            <person name="Hankeln T."/>
        </authorList>
    </citation>
    <scope>NUCLEOTIDE SEQUENCE [MRNA]</scope>
    <source>
        <tissue>Brain</tissue>
    </source>
</reference>
<comment type="function">
    <text evidence="2">Monomeric globin with a bis-histidyl six-coordinate heme-iron atom through which it can bind dioxygen, carbon monoxide and nitric oxide. Could help transport oxygen and increase its availability to the metabolically active neuronal tissues, though its low quantity in tissues as well as its high affinity for dioxygen, which may limit its oxygen-releasing ability, argue against it. The ferrous/deoxygenated form exhibits a nitrite reductase activity and it could produce nitric oxide which in turn inhibits cellular respiration in response to hypoxia. In its ferrous/deoxygenated state, it may also exhibit GDI (Guanine nucleotide Dissociation Inhibitor) activity toward heterotrimeric G-alpha proteins, thereby regulating signal transduction to facilitate neuroprotective responses in the wake of hypoxia and associated oxidative stress.</text>
</comment>
<comment type="catalytic activity">
    <reaction evidence="2">
        <text>Fe(III)-heme b-[protein] + nitric oxide + H2O = Fe(II)-heme b-[protein] + nitrite + 2 H(+)</text>
        <dbReference type="Rhea" id="RHEA:77711"/>
        <dbReference type="Rhea" id="RHEA-COMP:18975"/>
        <dbReference type="Rhea" id="RHEA-COMP:18976"/>
        <dbReference type="ChEBI" id="CHEBI:15377"/>
        <dbReference type="ChEBI" id="CHEBI:15378"/>
        <dbReference type="ChEBI" id="CHEBI:16301"/>
        <dbReference type="ChEBI" id="CHEBI:16480"/>
        <dbReference type="ChEBI" id="CHEBI:55376"/>
        <dbReference type="ChEBI" id="CHEBI:60344"/>
    </reaction>
    <physiologicalReaction direction="right-to-left" evidence="2">
        <dbReference type="Rhea" id="RHEA:77713"/>
    </physiologicalReaction>
</comment>
<comment type="subunit">
    <text evidence="1 2">Monomer (By similarity). Homodimer and homotetramer; disulfide-linked. Mainly monomeric but also detected as part of homodimers and homotetramers (By similarity). Interacts with 14-3-3 proteins; regulates the phosphorylation of NGB. Could interact (ferrous form) with G-alpha(i) proteins (GTP-bound form) (By similarity).</text>
</comment>
<comment type="subcellular location">
    <subcellularLocation>
        <location evidence="1">Cytoplasm</location>
        <location evidence="1">Cytosol</location>
    </subcellularLocation>
    <subcellularLocation>
        <location evidence="1">Mitochondrion matrix</location>
    </subcellularLocation>
    <text evidence="1">Enriched in mitochondrial matrix upon oxygen-glucose deprivation.</text>
</comment>
<comment type="PTM">
    <text evidence="2">Phosphorylated during hypoxia by ERK1/ERK2. Phosphorylation regulates the heme pocket hexacoordination preventing the association of His-64 with the heme metal center. Thereby, promotes the access of dioxygen and nitrite to the heme and stimulates the nitrite reductase activity. Phosphorylation during hypoxia is stabilized by 14-3-3 proteins.</text>
</comment>
<comment type="similarity">
    <text evidence="3">Belongs to the globin family.</text>
</comment>
<feature type="chain" id="PRO_0000053395" description="Neuroglobin">
    <location>
        <begin position="1"/>
        <end position="151"/>
    </location>
</feature>
<feature type="domain" description="Globin" evidence="3">
    <location>
        <begin position="1"/>
        <end position="149"/>
    </location>
</feature>
<feature type="binding site" description="distal binding residue; reversible" evidence="2 3">
    <location>
        <position position="64"/>
    </location>
    <ligand>
        <name>heme b</name>
        <dbReference type="ChEBI" id="CHEBI:60344"/>
    </ligand>
    <ligandPart>
        <name>Fe</name>
        <dbReference type="ChEBI" id="CHEBI:18248"/>
    </ligandPart>
</feature>
<feature type="binding site" description="proximal binding residue" evidence="2 3">
    <location>
        <position position="96"/>
    </location>
    <ligand>
        <name>heme b</name>
        <dbReference type="ChEBI" id="CHEBI:60344"/>
    </ligand>
    <ligandPart>
        <name>Fe</name>
        <dbReference type="ChEBI" id="CHEBI:18248"/>
    </ligandPart>
</feature>
<keyword id="KW-0963">Cytoplasm</keyword>
<keyword id="KW-1015">Disulfide bond</keyword>
<keyword id="KW-0349">Heme</keyword>
<keyword id="KW-0408">Iron</keyword>
<keyword id="KW-0479">Metal-binding</keyword>
<keyword id="KW-0496">Mitochondrion</keyword>
<keyword id="KW-0560">Oxidoreductase</keyword>
<keyword id="KW-1185">Reference proteome</keyword>
<evidence type="ECO:0000250" key="1">
    <source>
        <dbReference type="UniProtKB" id="Q9ER97"/>
    </source>
</evidence>
<evidence type="ECO:0000250" key="2">
    <source>
        <dbReference type="UniProtKB" id="Q9NPG2"/>
    </source>
</evidence>
<evidence type="ECO:0000255" key="3">
    <source>
        <dbReference type="PROSITE-ProRule" id="PRU00238"/>
    </source>
</evidence>
<evidence type="ECO:0000303" key="4">
    <source>
    </source>
</evidence>
<proteinExistence type="evidence at transcript level"/>
<name>NGB_PIG</name>
<gene>
    <name evidence="2" type="primary">NGB</name>
</gene>
<dbReference type="EC" id="1.7.-.-" evidence="2"/>
<dbReference type="EMBL" id="AJ635235">
    <property type="protein sequence ID" value="CAG25617.1"/>
    <property type="molecule type" value="mRNA"/>
</dbReference>
<dbReference type="RefSeq" id="NP_001001647.1">
    <property type="nucleotide sequence ID" value="NM_001001647.1"/>
</dbReference>
<dbReference type="SMR" id="Q6WZ17"/>
<dbReference type="FunCoup" id="Q6WZ17">
    <property type="interactions" value="233"/>
</dbReference>
<dbReference type="STRING" id="9823.ENSSSCP00000002600"/>
<dbReference type="PaxDb" id="9823-ENSSSCP00000002600"/>
<dbReference type="Ensembl" id="ENSSSCT00000002667.5">
    <property type="protein sequence ID" value="ENSSSCP00000002600.2"/>
    <property type="gene ID" value="ENSSSCG00000002399.5"/>
</dbReference>
<dbReference type="Ensembl" id="ENSSSCT00015053660.1">
    <property type="protein sequence ID" value="ENSSSCP00015021514.1"/>
    <property type="gene ID" value="ENSSSCG00015040245.1"/>
</dbReference>
<dbReference type="Ensembl" id="ENSSSCT00015053829.1">
    <property type="protein sequence ID" value="ENSSSCP00015021582.1"/>
    <property type="gene ID" value="ENSSSCG00015040245.1"/>
</dbReference>
<dbReference type="Ensembl" id="ENSSSCT00030040889.1">
    <property type="protein sequence ID" value="ENSSSCP00030018650.1"/>
    <property type="gene ID" value="ENSSSCG00030029374.1"/>
</dbReference>
<dbReference type="Ensembl" id="ENSSSCT00035031434.1">
    <property type="protein sequence ID" value="ENSSSCP00035012314.1"/>
    <property type="gene ID" value="ENSSSCG00035023947.1"/>
</dbReference>
<dbReference type="Ensembl" id="ENSSSCT00040038199.1">
    <property type="protein sequence ID" value="ENSSSCP00040015934.1"/>
    <property type="gene ID" value="ENSSSCG00040028459.1"/>
</dbReference>
<dbReference type="Ensembl" id="ENSSSCT00045038669.1">
    <property type="protein sequence ID" value="ENSSSCP00045026885.1"/>
    <property type="gene ID" value="ENSSSCG00045022666.1"/>
</dbReference>
<dbReference type="Ensembl" id="ENSSSCT00050071773.1">
    <property type="protein sequence ID" value="ENSSSCP00050030870.1"/>
    <property type="gene ID" value="ENSSSCG00050052701.1"/>
</dbReference>
<dbReference type="Ensembl" id="ENSSSCT00055005420.1">
    <property type="protein sequence ID" value="ENSSSCP00055004195.1"/>
    <property type="gene ID" value="ENSSSCG00055002829.1"/>
</dbReference>
<dbReference type="Ensembl" id="ENSSSCT00060067659.1">
    <property type="protein sequence ID" value="ENSSSCP00060029018.1"/>
    <property type="gene ID" value="ENSSSCG00060049803.1"/>
</dbReference>
<dbReference type="Ensembl" id="ENSSSCT00065068064.1">
    <property type="protein sequence ID" value="ENSSSCP00065029635.1"/>
    <property type="gene ID" value="ENSSSCG00065049691.1"/>
</dbReference>
<dbReference type="Ensembl" id="ENSSSCT00070012865.1">
    <property type="protein sequence ID" value="ENSSSCP00070010587.1"/>
    <property type="gene ID" value="ENSSSCG00070006712.1"/>
</dbReference>
<dbReference type="Ensembl" id="ENSSSCT00085037400">
    <property type="protein sequence ID" value="ENSSSCP00085025967"/>
    <property type="gene ID" value="ENSSSCG00085019624"/>
</dbReference>
<dbReference type="Ensembl" id="ENSSSCT00105069621">
    <property type="protein sequence ID" value="ENSSSCP00105049305"/>
    <property type="gene ID" value="ENSSSCG00105036558"/>
</dbReference>
<dbReference type="Ensembl" id="ENSSSCT00110062260">
    <property type="protein sequence ID" value="ENSSSCP00110043553"/>
    <property type="gene ID" value="ENSSSCG00110032623"/>
</dbReference>
<dbReference type="Ensembl" id="ENSSSCT00115014455">
    <property type="protein sequence ID" value="ENSSSCP00115013652"/>
    <property type="gene ID" value="ENSSSCG00115008285"/>
</dbReference>
<dbReference type="Ensembl" id="ENSSSCT00130052617">
    <property type="protein sequence ID" value="ENSSSCP00130037383"/>
    <property type="gene ID" value="ENSSSCG00130027127"/>
</dbReference>
<dbReference type="GeneID" id="414438"/>
<dbReference type="KEGG" id="ssc:414438"/>
<dbReference type="CTD" id="58157"/>
<dbReference type="VGNC" id="VGNC:90732">
    <property type="gene designation" value="NGB"/>
</dbReference>
<dbReference type="eggNOG" id="KOG3378">
    <property type="taxonomic scope" value="Eukaryota"/>
</dbReference>
<dbReference type="GeneTree" id="ENSGT00510000048375"/>
<dbReference type="HOGENOM" id="CLU_003827_13_5_1"/>
<dbReference type="InParanoid" id="Q6WZ17"/>
<dbReference type="OMA" id="GRKLMAM"/>
<dbReference type="OrthoDB" id="436496at2759"/>
<dbReference type="TreeFam" id="TF333247"/>
<dbReference type="Reactome" id="R-SSC-8981607">
    <property type="pathway name" value="Intracellular oxygen transport"/>
</dbReference>
<dbReference type="Proteomes" id="UP000008227">
    <property type="component" value="Chromosome 7"/>
</dbReference>
<dbReference type="Proteomes" id="UP000314985">
    <property type="component" value="Chromosome 7"/>
</dbReference>
<dbReference type="Proteomes" id="UP000694570">
    <property type="component" value="Unplaced"/>
</dbReference>
<dbReference type="Proteomes" id="UP000694571">
    <property type="component" value="Unplaced"/>
</dbReference>
<dbReference type="Proteomes" id="UP000694720">
    <property type="component" value="Unplaced"/>
</dbReference>
<dbReference type="Proteomes" id="UP000694722">
    <property type="component" value="Unplaced"/>
</dbReference>
<dbReference type="Proteomes" id="UP000694723">
    <property type="component" value="Unplaced"/>
</dbReference>
<dbReference type="Proteomes" id="UP000694724">
    <property type="component" value="Unplaced"/>
</dbReference>
<dbReference type="Proteomes" id="UP000694725">
    <property type="component" value="Unplaced"/>
</dbReference>
<dbReference type="Proteomes" id="UP000694726">
    <property type="component" value="Unplaced"/>
</dbReference>
<dbReference type="Proteomes" id="UP000694727">
    <property type="component" value="Unplaced"/>
</dbReference>
<dbReference type="Proteomes" id="UP000694728">
    <property type="component" value="Unplaced"/>
</dbReference>
<dbReference type="Bgee" id="ENSSSCG00000002399">
    <property type="expression patterns" value="Expressed in hypothalamus and 11 other cell types or tissues"/>
</dbReference>
<dbReference type="GO" id="GO:0005829">
    <property type="term" value="C:cytosol"/>
    <property type="evidence" value="ECO:0007669"/>
    <property type="project" value="UniProtKB-SubCell"/>
</dbReference>
<dbReference type="GO" id="GO:0005759">
    <property type="term" value="C:mitochondrial matrix"/>
    <property type="evidence" value="ECO:0007669"/>
    <property type="project" value="UniProtKB-SubCell"/>
</dbReference>
<dbReference type="GO" id="GO:0005092">
    <property type="term" value="F:GDP-dissociation inhibitor activity"/>
    <property type="evidence" value="ECO:0000250"/>
    <property type="project" value="UniProtKB"/>
</dbReference>
<dbReference type="GO" id="GO:0020037">
    <property type="term" value="F:heme binding"/>
    <property type="evidence" value="ECO:0007669"/>
    <property type="project" value="InterPro"/>
</dbReference>
<dbReference type="GO" id="GO:0046872">
    <property type="term" value="F:metal ion binding"/>
    <property type="evidence" value="ECO:0007669"/>
    <property type="project" value="UniProtKB-KW"/>
</dbReference>
<dbReference type="GO" id="GO:0098809">
    <property type="term" value="F:nitrite reductase activity"/>
    <property type="evidence" value="ECO:0000250"/>
    <property type="project" value="UniProtKB"/>
</dbReference>
<dbReference type="GO" id="GO:0019825">
    <property type="term" value="F:oxygen binding"/>
    <property type="evidence" value="ECO:0000250"/>
    <property type="project" value="UniProtKB"/>
</dbReference>
<dbReference type="GO" id="GO:0005344">
    <property type="term" value="F:oxygen carrier activity"/>
    <property type="evidence" value="ECO:0000318"/>
    <property type="project" value="GO_Central"/>
</dbReference>
<dbReference type="GO" id="GO:0071456">
    <property type="term" value="P:cellular response to hypoxia"/>
    <property type="evidence" value="ECO:0000250"/>
    <property type="project" value="UniProtKB"/>
</dbReference>
<dbReference type="GO" id="GO:0015671">
    <property type="term" value="P:oxygen transport"/>
    <property type="evidence" value="ECO:0000318"/>
    <property type="project" value="GO_Central"/>
</dbReference>
<dbReference type="GO" id="GO:0001666">
    <property type="term" value="P:response to hypoxia"/>
    <property type="evidence" value="ECO:0000318"/>
    <property type="project" value="GO_Central"/>
</dbReference>
<dbReference type="CDD" id="cd08920">
    <property type="entry name" value="Ngb"/>
    <property type="match status" value="1"/>
</dbReference>
<dbReference type="FunFam" id="1.10.490.10:FF:000006">
    <property type="entry name" value="Neuroglobin"/>
    <property type="match status" value="1"/>
</dbReference>
<dbReference type="Gene3D" id="1.10.490.10">
    <property type="entry name" value="Globins"/>
    <property type="match status" value="1"/>
</dbReference>
<dbReference type="InterPro" id="IPR000971">
    <property type="entry name" value="Globin"/>
</dbReference>
<dbReference type="InterPro" id="IPR050532">
    <property type="entry name" value="Globin-like_OT"/>
</dbReference>
<dbReference type="InterPro" id="IPR009050">
    <property type="entry name" value="Globin-like_sf"/>
</dbReference>
<dbReference type="InterPro" id="IPR012292">
    <property type="entry name" value="Globin/Proto"/>
</dbReference>
<dbReference type="PANTHER" id="PTHR46458">
    <property type="entry name" value="BLR2807 PROTEIN"/>
    <property type="match status" value="1"/>
</dbReference>
<dbReference type="PANTHER" id="PTHR46458:SF19">
    <property type="entry name" value="NEUROGLOBIN"/>
    <property type="match status" value="1"/>
</dbReference>
<dbReference type="Pfam" id="PF00042">
    <property type="entry name" value="Globin"/>
    <property type="match status" value="1"/>
</dbReference>
<dbReference type="SUPFAM" id="SSF46458">
    <property type="entry name" value="Globin-like"/>
    <property type="match status" value="1"/>
</dbReference>
<dbReference type="PROSITE" id="PS01033">
    <property type="entry name" value="GLOBIN"/>
    <property type="match status" value="1"/>
</dbReference>
<protein>
    <recommendedName>
        <fullName evidence="4">Neuroglobin</fullName>
    </recommendedName>
    <alternativeName>
        <fullName evidence="2">Nitrite reductase</fullName>
        <ecNumber evidence="2">1.7.-.-</ecNumber>
    </alternativeName>
</protein>
<sequence length="151" mass="16986">MERPEHELIRQSWRAVSRSPLEHGTVLFARLFDLEPDLLPLFQYNCRQFSSPEDCLSSPEFLDHIRKVMLVIDAAVTNVEDLSSLEEYLAGLGRKHRAVGVKLSSFSAVGESLLYMLEKCLGPTFTPATRAAWSQLYGAVVQAMSRGWNGE</sequence>
<organism>
    <name type="scientific">Sus scrofa</name>
    <name type="common">Pig</name>
    <dbReference type="NCBI Taxonomy" id="9823"/>
    <lineage>
        <taxon>Eukaryota</taxon>
        <taxon>Metazoa</taxon>
        <taxon>Chordata</taxon>
        <taxon>Craniata</taxon>
        <taxon>Vertebrata</taxon>
        <taxon>Euteleostomi</taxon>
        <taxon>Mammalia</taxon>
        <taxon>Eutheria</taxon>
        <taxon>Laurasiatheria</taxon>
        <taxon>Artiodactyla</taxon>
        <taxon>Suina</taxon>
        <taxon>Suidae</taxon>
        <taxon>Sus</taxon>
    </lineage>
</organism>
<accession>Q6WZ17</accession>
<accession>Q6ZYE8</accession>